<comment type="function">
    <text evidence="1">Cell wall formation.</text>
</comment>
<comment type="catalytic activity">
    <reaction evidence="1">
        <text>UDP-N-acetyl-alpha-D-muramate + L-alanine + ATP = UDP-N-acetyl-alpha-D-muramoyl-L-alanine + ADP + phosphate + H(+)</text>
        <dbReference type="Rhea" id="RHEA:23372"/>
        <dbReference type="ChEBI" id="CHEBI:15378"/>
        <dbReference type="ChEBI" id="CHEBI:30616"/>
        <dbReference type="ChEBI" id="CHEBI:43474"/>
        <dbReference type="ChEBI" id="CHEBI:57972"/>
        <dbReference type="ChEBI" id="CHEBI:70757"/>
        <dbReference type="ChEBI" id="CHEBI:83898"/>
        <dbReference type="ChEBI" id="CHEBI:456216"/>
        <dbReference type="EC" id="6.3.2.8"/>
    </reaction>
</comment>
<comment type="pathway">
    <text evidence="1">Cell wall biogenesis; peptidoglycan biosynthesis.</text>
</comment>
<comment type="subcellular location">
    <subcellularLocation>
        <location evidence="1">Cytoplasm</location>
    </subcellularLocation>
</comment>
<comment type="similarity">
    <text evidence="1">Belongs to the MurCDEF family.</text>
</comment>
<gene>
    <name evidence="1" type="primary">murC</name>
    <name type="ordered locus">A2cp1_3912</name>
</gene>
<evidence type="ECO:0000255" key="1">
    <source>
        <dbReference type="HAMAP-Rule" id="MF_00046"/>
    </source>
</evidence>
<proteinExistence type="inferred from homology"/>
<accession>B8J8E9</accession>
<protein>
    <recommendedName>
        <fullName evidence="1">UDP-N-acetylmuramate--L-alanine ligase</fullName>
        <ecNumber evidence="1">6.3.2.8</ecNumber>
    </recommendedName>
    <alternativeName>
        <fullName evidence="1">UDP-N-acetylmuramoyl-L-alanine synthetase</fullName>
    </alternativeName>
</protein>
<feature type="chain" id="PRO_1000192088" description="UDP-N-acetylmuramate--L-alanine ligase">
    <location>
        <begin position="1"/>
        <end position="458"/>
    </location>
</feature>
<feature type="binding site" evidence="1">
    <location>
        <begin position="115"/>
        <end position="121"/>
    </location>
    <ligand>
        <name>ATP</name>
        <dbReference type="ChEBI" id="CHEBI:30616"/>
    </ligand>
</feature>
<name>MURC_ANAD2</name>
<organism>
    <name type="scientific">Anaeromyxobacter dehalogenans (strain 2CP-1 / ATCC BAA-258)</name>
    <dbReference type="NCBI Taxonomy" id="455488"/>
    <lineage>
        <taxon>Bacteria</taxon>
        <taxon>Pseudomonadati</taxon>
        <taxon>Myxococcota</taxon>
        <taxon>Myxococcia</taxon>
        <taxon>Myxococcales</taxon>
        <taxon>Cystobacterineae</taxon>
        <taxon>Anaeromyxobacteraceae</taxon>
        <taxon>Anaeromyxobacter</taxon>
    </lineage>
</organism>
<reference key="1">
    <citation type="submission" date="2009-01" db="EMBL/GenBank/DDBJ databases">
        <title>Complete sequence of Anaeromyxobacter dehalogenans 2CP-1.</title>
        <authorList>
            <person name="Lucas S."/>
            <person name="Copeland A."/>
            <person name="Lapidus A."/>
            <person name="Glavina del Rio T."/>
            <person name="Dalin E."/>
            <person name="Tice H."/>
            <person name="Bruce D."/>
            <person name="Goodwin L."/>
            <person name="Pitluck S."/>
            <person name="Saunders E."/>
            <person name="Brettin T."/>
            <person name="Detter J.C."/>
            <person name="Han C."/>
            <person name="Larimer F."/>
            <person name="Land M."/>
            <person name="Hauser L."/>
            <person name="Kyrpides N."/>
            <person name="Ovchinnikova G."/>
            <person name="Beliaev A.S."/>
            <person name="Richardson P."/>
        </authorList>
    </citation>
    <scope>NUCLEOTIDE SEQUENCE [LARGE SCALE GENOMIC DNA]</scope>
    <source>
        <strain>2CP-1 / ATCC BAA-258</strain>
    </source>
</reference>
<dbReference type="EC" id="6.3.2.8" evidence="1"/>
<dbReference type="EMBL" id="CP001359">
    <property type="protein sequence ID" value="ACL67235.1"/>
    <property type="molecule type" value="Genomic_DNA"/>
</dbReference>
<dbReference type="RefSeq" id="WP_012527799.1">
    <property type="nucleotide sequence ID" value="NC_011891.1"/>
</dbReference>
<dbReference type="SMR" id="B8J8E9"/>
<dbReference type="KEGG" id="acp:A2cp1_3912"/>
<dbReference type="HOGENOM" id="CLU_028104_2_2_7"/>
<dbReference type="UniPathway" id="UPA00219"/>
<dbReference type="Proteomes" id="UP000007089">
    <property type="component" value="Chromosome"/>
</dbReference>
<dbReference type="GO" id="GO:0005737">
    <property type="term" value="C:cytoplasm"/>
    <property type="evidence" value="ECO:0007669"/>
    <property type="project" value="UniProtKB-SubCell"/>
</dbReference>
<dbReference type="GO" id="GO:0005524">
    <property type="term" value="F:ATP binding"/>
    <property type="evidence" value="ECO:0007669"/>
    <property type="project" value="UniProtKB-UniRule"/>
</dbReference>
<dbReference type="GO" id="GO:0008763">
    <property type="term" value="F:UDP-N-acetylmuramate-L-alanine ligase activity"/>
    <property type="evidence" value="ECO:0007669"/>
    <property type="project" value="UniProtKB-UniRule"/>
</dbReference>
<dbReference type="GO" id="GO:0051301">
    <property type="term" value="P:cell division"/>
    <property type="evidence" value="ECO:0007669"/>
    <property type="project" value="UniProtKB-KW"/>
</dbReference>
<dbReference type="GO" id="GO:0071555">
    <property type="term" value="P:cell wall organization"/>
    <property type="evidence" value="ECO:0007669"/>
    <property type="project" value="UniProtKB-KW"/>
</dbReference>
<dbReference type="GO" id="GO:0009252">
    <property type="term" value="P:peptidoglycan biosynthetic process"/>
    <property type="evidence" value="ECO:0007669"/>
    <property type="project" value="UniProtKB-UniRule"/>
</dbReference>
<dbReference type="GO" id="GO:0008360">
    <property type="term" value="P:regulation of cell shape"/>
    <property type="evidence" value="ECO:0007669"/>
    <property type="project" value="UniProtKB-KW"/>
</dbReference>
<dbReference type="Gene3D" id="3.90.190.20">
    <property type="entry name" value="Mur ligase, C-terminal domain"/>
    <property type="match status" value="1"/>
</dbReference>
<dbReference type="Gene3D" id="3.40.1190.10">
    <property type="entry name" value="Mur-like, catalytic domain"/>
    <property type="match status" value="1"/>
</dbReference>
<dbReference type="Gene3D" id="3.40.50.720">
    <property type="entry name" value="NAD(P)-binding Rossmann-like Domain"/>
    <property type="match status" value="1"/>
</dbReference>
<dbReference type="HAMAP" id="MF_00046">
    <property type="entry name" value="MurC"/>
    <property type="match status" value="1"/>
</dbReference>
<dbReference type="InterPro" id="IPR036565">
    <property type="entry name" value="Mur-like_cat_sf"/>
</dbReference>
<dbReference type="InterPro" id="IPR004101">
    <property type="entry name" value="Mur_ligase_C"/>
</dbReference>
<dbReference type="InterPro" id="IPR036615">
    <property type="entry name" value="Mur_ligase_C_dom_sf"/>
</dbReference>
<dbReference type="InterPro" id="IPR013221">
    <property type="entry name" value="Mur_ligase_cen"/>
</dbReference>
<dbReference type="InterPro" id="IPR000713">
    <property type="entry name" value="Mur_ligase_N"/>
</dbReference>
<dbReference type="InterPro" id="IPR050061">
    <property type="entry name" value="MurCDEF_pg_biosynth"/>
</dbReference>
<dbReference type="InterPro" id="IPR005758">
    <property type="entry name" value="UDP-N-AcMur_Ala_ligase_MurC"/>
</dbReference>
<dbReference type="NCBIfam" id="TIGR01082">
    <property type="entry name" value="murC"/>
    <property type="match status" value="1"/>
</dbReference>
<dbReference type="PANTHER" id="PTHR43445:SF3">
    <property type="entry name" value="UDP-N-ACETYLMURAMATE--L-ALANINE LIGASE"/>
    <property type="match status" value="1"/>
</dbReference>
<dbReference type="PANTHER" id="PTHR43445">
    <property type="entry name" value="UDP-N-ACETYLMURAMATE--L-ALANINE LIGASE-RELATED"/>
    <property type="match status" value="1"/>
</dbReference>
<dbReference type="Pfam" id="PF01225">
    <property type="entry name" value="Mur_ligase"/>
    <property type="match status" value="1"/>
</dbReference>
<dbReference type="Pfam" id="PF02875">
    <property type="entry name" value="Mur_ligase_C"/>
    <property type="match status" value="1"/>
</dbReference>
<dbReference type="Pfam" id="PF08245">
    <property type="entry name" value="Mur_ligase_M"/>
    <property type="match status" value="1"/>
</dbReference>
<dbReference type="SUPFAM" id="SSF51984">
    <property type="entry name" value="MurCD N-terminal domain"/>
    <property type="match status" value="1"/>
</dbReference>
<dbReference type="SUPFAM" id="SSF53623">
    <property type="entry name" value="MurD-like peptide ligases, catalytic domain"/>
    <property type="match status" value="1"/>
</dbReference>
<dbReference type="SUPFAM" id="SSF53244">
    <property type="entry name" value="MurD-like peptide ligases, peptide-binding domain"/>
    <property type="match status" value="1"/>
</dbReference>
<sequence>MSLFRSRQAKIHFVGVGGIGMSGIAEVLLNLGYTVSGSDLRESETTRRLAGLGGRISYGHAAENVLQVDVVVISSAVKRDNPEVLEARRRKIPVIPRAEMLAELMRLKYGVAIAGSHGKTTTTSMAAHLLAHAGLDPTAVVGGKVNAFGSNAKLGKGDYMVVEADESDGSFLRIPPTIAIVTNIDPEHLDHWKTPDALRRGFVDFVNRVPFYGLAILCIDHPTVQSILPDVEKRAVTYGESHQADYRAEAIELSGHAVRFDAFRRDEALGRFEVAMVGRHNALNALAVIALGDEMGIPPLVTREALRSFQGVQRRFTVRGEAAGVTVVDDYGHHPAEVKATLQGAREAFKRRVVCLFQPHRYTRTRDLMAEFATAFNDADVLLLTDIYAAGEEPIPGATAANLADAIRAWGHRDVTLVPRAELARAARERVRPGDLVLTLGAGDVTAAGPELLALLER</sequence>
<keyword id="KW-0067">ATP-binding</keyword>
<keyword id="KW-0131">Cell cycle</keyword>
<keyword id="KW-0132">Cell division</keyword>
<keyword id="KW-0133">Cell shape</keyword>
<keyword id="KW-0961">Cell wall biogenesis/degradation</keyword>
<keyword id="KW-0963">Cytoplasm</keyword>
<keyword id="KW-0436">Ligase</keyword>
<keyword id="KW-0547">Nucleotide-binding</keyword>
<keyword id="KW-0573">Peptidoglycan synthesis</keyword>